<sequence>MRGMLPLFEPKGRVLLVDGHHLAYRTFHALKGLTTSRGEPVQAVYGFAKSLLKALKEDGDAVIVVFDAKAPSFRHEAYGGYKAGRAPTPEDFPRQLALIKELVDLLGLARLEVPGYEADDVLASLAKKAEKEGYEVRILTADKDLYQLLSDRIHVLHPEGYLITPAWLWEKYGLRPDQWADYRALTGDESDNLPGVKGIGEKTARKLLEEWGSLEALLKNLDRLKPAIREKILAHMDDLKLSWDLAKVRTDLPLEVDFAKRREPDRERLRAFLERLEFGSLLHEFGLLESPKALEEAPWPPPEGAFVGFVLSRKEPMWADLLALAAARGGRVHRAPEPYKALRDLKEARGLLAKDLSVLALREGLGLPPGDDPMLLAYLLDPSNTTPEGVARRYGGEWTEEAGERAALSERLFANLWGRLEGEERLLWLYREVERPLSAVLAHMEATGVRLDVAYLRALSLEVAEEIARLEAEVFRLAGHPFNLNSRDQLERVLFDELGLPAIGKTEKTGKRSTSAAVLEALREAHPIVEKILQYRELTKLKSTYIDPLPDLIHPRTGRLHTRFNQTATATGRLSSSDPNLQNIPVRTPLGQRIRRAFIAEEGWLLVALDYSQIELRVLAHLSGDENLIRVFQEGRDIHTETASWMFGVPREAVDPLMRRAAKTINFGVLYGMSAHRLSQELAIPYEEAQAFIERYFQSFPKVRAWIEKTLEEGRRRGYVETLFGRRRYVPDLEARVKSVREAAERMAFNMPVQGTAADLMKLAMVKLFPRLEEMGARMLLQVHDELVLEAPKERAEAVARLAKEVMEGVYPLAVPLEVEVGIGEDWLSAKE</sequence>
<evidence type="ECO:0000250" key="1"/>
<evidence type="ECO:0000250" key="2">
    <source>
        <dbReference type="UniProtKB" id="P52026"/>
    </source>
</evidence>
<evidence type="ECO:0000255" key="3"/>
<evidence type="ECO:0000305" key="4"/>
<evidence type="ECO:0000305" key="5">
    <source>
    </source>
</evidence>
<evidence type="ECO:0007829" key="6">
    <source>
        <dbReference type="PDB" id="1BGX"/>
    </source>
</evidence>
<evidence type="ECO:0007829" key="7">
    <source>
        <dbReference type="PDB" id="1TAQ"/>
    </source>
</evidence>
<evidence type="ECO:0007829" key="8">
    <source>
        <dbReference type="PDB" id="4C8L"/>
    </source>
</evidence>
<evidence type="ECO:0007829" key="9">
    <source>
        <dbReference type="PDB" id="4C8M"/>
    </source>
</evidence>
<evidence type="ECO:0007829" key="10">
    <source>
        <dbReference type="PDB" id="4DLE"/>
    </source>
</evidence>
<evidence type="ECO:0007829" key="11">
    <source>
        <dbReference type="PDB" id="5KTQ"/>
    </source>
</evidence>
<evidence type="ECO:0007829" key="12">
    <source>
        <dbReference type="PDB" id="6FBC"/>
    </source>
</evidence>
<feature type="chain" id="PRO_0000101256" description="DNA polymerase I, thermostable">
    <location>
        <begin position="1"/>
        <end position="832"/>
    </location>
</feature>
<feature type="domain" description="5'-3' exonuclease" evidence="3">
    <location>
        <begin position="175"/>
        <end position="260"/>
    </location>
</feature>
<feature type="region of interest" description="Polymerase" evidence="1">
    <location>
        <begin position="410"/>
        <end position="832"/>
    </location>
</feature>
<feature type="sequence conflict" description="In Ref. 2; BAA06775." evidence="4" ref="2">
    <original>V</original>
    <variation>A</variation>
    <location>
        <position position="155"/>
    </location>
</feature>
<feature type="strand" evidence="7">
    <location>
        <begin position="12"/>
        <end position="17"/>
    </location>
</feature>
<feature type="helix" evidence="6">
    <location>
        <begin position="22"/>
        <end position="25"/>
    </location>
</feature>
<feature type="helix" evidence="7">
    <location>
        <begin position="26"/>
        <end position="28"/>
    </location>
</feature>
<feature type="strand" evidence="6">
    <location>
        <begin position="36"/>
        <end position="38"/>
    </location>
</feature>
<feature type="strand" evidence="6">
    <location>
        <begin position="42"/>
        <end position="44"/>
    </location>
</feature>
<feature type="helix" evidence="6">
    <location>
        <begin position="47"/>
        <end position="53"/>
    </location>
</feature>
<feature type="helix" evidence="6">
    <location>
        <begin position="54"/>
        <end position="56"/>
    </location>
</feature>
<feature type="strand" evidence="7">
    <location>
        <begin position="60"/>
        <end position="65"/>
    </location>
</feature>
<feature type="strand" evidence="6">
    <location>
        <begin position="69"/>
        <end position="71"/>
    </location>
</feature>
<feature type="strand" evidence="6">
    <location>
        <begin position="73"/>
        <end position="75"/>
    </location>
</feature>
<feature type="helix" evidence="6">
    <location>
        <begin position="76"/>
        <end position="79"/>
    </location>
</feature>
<feature type="turn" evidence="6">
    <location>
        <begin position="80"/>
        <end position="82"/>
    </location>
</feature>
<feature type="helix" evidence="6">
    <location>
        <begin position="95"/>
        <end position="97"/>
    </location>
</feature>
<feature type="helix" evidence="6">
    <location>
        <begin position="99"/>
        <end position="105"/>
    </location>
</feature>
<feature type="strand" evidence="7">
    <location>
        <begin position="109"/>
        <end position="111"/>
    </location>
</feature>
<feature type="strand" evidence="6">
    <location>
        <begin position="114"/>
        <end position="116"/>
    </location>
</feature>
<feature type="helix" evidence="6">
    <location>
        <begin position="118"/>
        <end position="132"/>
    </location>
</feature>
<feature type="strand" evidence="7">
    <location>
        <begin position="134"/>
        <end position="139"/>
    </location>
</feature>
<feature type="helix" evidence="7">
    <location>
        <begin position="143"/>
        <end position="148"/>
    </location>
</feature>
<feature type="strand" evidence="7">
    <location>
        <begin position="150"/>
        <end position="156"/>
    </location>
</feature>
<feature type="strand" evidence="6">
    <location>
        <begin position="158"/>
        <end position="160"/>
    </location>
</feature>
<feature type="helix" evidence="6">
    <location>
        <begin position="168"/>
        <end position="171"/>
    </location>
</feature>
<feature type="helix" evidence="6">
    <location>
        <begin position="176"/>
        <end position="178"/>
    </location>
</feature>
<feature type="turn" evidence="6">
    <location>
        <begin position="179"/>
        <end position="184"/>
    </location>
</feature>
<feature type="strand" evidence="6">
    <location>
        <begin position="189"/>
        <end position="191"/>
    </location>
</feature>
<feature type="strand" evidence="6">
    <location>
        <begin position="199"/>
        <end position="201"/>
    </location>
</feature>
<feature type="turn" evidence="6">
    <location>
        <begin position="203"/>
        <end position="207"/>
    </location>
</feature>
<feature type="helix" evidence="6">
    <location>
        <begin position="208"/>
        <end position="210"/>
    </location>
</feature>
<feature type="strand" evidence="7">
    <location>
        <begin position="212"/>
        <end position="214"/>
    </location>
</feature>
<feature type="strand" evidence="6">
    <location>
        <begin position="216"/>
        <end position="220"/>
    </location>
</feature>
<feature type="turn" evidence="6">
    <location>
        <begin position="226"/>
        <end position="228"/>
    </location>
</feature>
<feature type="helix" evidence="6">
    <location>
        <begin position="230"/>
        <end position="233"/>
    </location>
</feature>
<feature type="strand" evidence="7">
    <location>
        <begin position="236"/>
        <end position="239"/>
    </location>
</feature>
<feature type="helix" evidence="6">
    <location>
        <begin position="242"/>
        <end position="244"/>
    </location>
</feature>
<feature type="helix" evidence="6">
    <location>
        <begin position="266"/>
        <end position="273"/>
    </location>
</feature>
<feature type="turn" evidence="6">
    <location>
        <begin position="274"/>
        <end position="277"/>
    </location>
</feature>
<feature type="helix" evidence="7">
    <location>
        <begin position="279"/>
        <end position="288"/>
    </location>
</feature>
<feature type="strand" evidence="12">
    <location>
        <begin position="295"/>
        <end position="297"/>
    </location>
</feature>
<feature type="strand" evidence="10">
    <location>
        <begin position="298"/>
        <end position="300"/>
    </location>
</feature>
<feature type="strand" evidence="12">
    <location>
        <begin position="306"/>
        <end position="314"/>
    </location>
</feature>
<feature type="turn" evidence="12">
    <location>
        <begin position="316"/>
        <end position="318"/>
    </location>
</feature>
<feature type="strand" evidence="12">
    <location>
        <begin position="321"/>
        <end position="328"/>
    </location>
</feature>
<feature type="strand" evidence="12">
    <location>
        <begin position="331"/>
        <end position="334"/>
    </location>
</feature>
<feature type="helix" evidence="12">
    <location>
        <begin position="338"/>
        <end position="342"/>
    </location>
</feature>
<feature type="strand" evidence="12">
    <location>
        <begin position="346"/>
        <end position="348"/>
    </location>
</feature>
<feature type="helix" evidence="12">
    <location>
        <begin position="353"/>
        <end position="362"/>
    </location>
</feature>
<feature type="helix" evidence="12">
    <location>
        <begin position="373"/>
        <end position="380"/>
    </location>
</feature>
<feature type="helix" evidence="12">
    <location>
        <begin position="387"/>
        <end position="394"/>
    </location>
</feature>
<feature type="helix" evidence="12">
    <location>
        <begin position="402"/>
        <end position="419"/>
    </location>
</feature>
<feature type="turn" evidence="12">
    <location>
        <begin position="420"/>
        <end position="422"/>
    </location>
</feature>
<feature type="helix" evidence="12">
    <location>
        <begin position="424"/>
        <end position="432"/>
    </location>
</feature>
<feature type="helix" evidence="12">
    <location>
        <begin position="434"/>
        <end position="447"/>
    </location>
</feature>
<feature type="strand" evidence="12">
    <location>
        <begin position="449"/>
        <end position="451"/>
    </location>
</feature>
<feature type="helix" evidence="12">
    <location>
        <begin position="453"/>
        <end position="478"/>
    </location>
</feature>
<feature type="helix" evidence="12">
    <location>
        <begin position="487"/>
        <end position="495"/>
    </location>
</feature>
<feature type="turn" evidence="12">
    <location>
        <begin position="507"/>
        <end position="509"/>
    </location>
</feature>
<feature type="helix" evidence="6">
    <location>
        <begin position="513"/>
        <end position="515"/>
    </location>
</feature>
<feature type="helix" evidence="12">
    <location>
        <begin position="516"/>
        <end position="520"/>
    </location>
</feature>
<feature type="turn" evidence="12">
    <location>
        <begin position="521"/>
        <end position="525"/>
    </location>
</feature>
<feature type="helix" evidence="12">
    <location>
        <begin position="527"/>
        <end position="544"/>
    </location>
</feature>
<feature type="turn" evidence="12">
    <location>
        <begin position="545"/>
        <end position="548"/>
    </location>
</feature>
<feature type="helix" evidence="12">
    <location>
        <begin position="549"/>
        <end position="552"/>
    </location>
</feature>
<feature type="turn" evidence="12">
    <location>
        <begin position="555"/>
        <end position="557"/>
    </location>
</feature>
<feature type="strand" evidence="12">
    <location>
        <begin position="558"/>
        <end position="560"/>
    </location>
</feature>
<feature type="strand" evidence="12">
    <location>
        <begin position="563"/>
        <end position="567"/>
    </location>
</feature>
<feature type="strand" evidence="12">
    <location>
        <begin position="570"/>
        <end position="572"/>
    </location>
</feature>
<feature type="strand" evidence="12">
    <location>
        <begin position="575"/>
        <end position="579"/>
    </location>
</feature>
<feature type="helix" evidence="9">
    <location>
        <begin position="581"/>
        <end position="583"/>
    </location>
</feature>
<feature type="strand" evidence="8">
    <location>
        <begin position="586"/>
        <end position="588"/>
    </location>
</feature>
<feature type="helix" evidence="12">
    <location>
        <begin position="589"/>
        <end position="595"/>
    </location>
</feature>
<feature type="strand" evidence="12">
    <location>
        <begin position="604"/>
        <end position="611"/>
    </location>
</feature>
<feature type="helix" evidence="12">
    <location>
        <begin position="614"/>
        <end position="623"/>
    </location>
</feature>
<feature type="helix" evidence="12">
    <location>
        <begin position="626"/>
        <end position="633"/>
    </location>
</feature>
<feature type="helix" evidence="12">
    <location>
        <begin position="638"/>
        <end position="647"/>
    </location>
</feature>
<feature type="helix" evidence="12">
    <location>
        <begin position="651"/>
        <end position="653"/>
    </location>
</feature>
<feature type="helix" evidence="12">
    <location>
        <begin position="656"/>
        <end position="670"/>
    </location>
</feature>
<feature type="helix" evidence="12">
    <location>
        <begin position="675"/>
        <end position="682"/>
    </location>
</feature>
<feature type="helix" evidence="12">
    <location>
        <begin position="686"/>
        <end position="699"/>
    </location>
</feature>
<feature type="helix" evidence="12">
    <location>
        <begin position="702"/>
        <end position="717"/>
    </location>
</feature>
<feature type="strand" evidence="12">
    <location>
        <begin position="718"/>
        <end position="721"/>
    </location>
</feature>
<feature type="strand" evidence="11">
    <location>
        <begin position="723"/>
        <end position="725"/>
    </location>
</feature>
<feature type="strand" evidence="12">
    <location>
        <begin position="727"/>
        <end position="729"/>
    </location>
</feature>
<feature type="helix" evidence="12">
    <location>
        <begin position="731"/>
        <end position="734"/>
    </location>
</feature>
<feature type="helix" evidence="12">
    <location>
        <begin position="738"/>
        <end position="775"/>
    </location>
</feature>
<feature type="strand" evidence="12">
    <location>
        <begin position="778"/>
        <end position="782"/>
    </location>
</feature>
<feature type="strand" evidence="12">
    <location>
        <begin position="784"/>
        <end position="792"/>
    </location>
</feature>
<feature type="helix" evidence="12">
    <location>
        <begin position="793"/>
        <end position="795"/>
    </location>
</feature>
<feature type="helix" evidence="12">
    <location>
        <begin position="796"/>
        <end position="808"/>
    </location>
</feature>
<feature type="strand" evidence="6">
    <location>
        <begin position="809"/>
        <end position="811"/>
    </location>
</feature>
<feature type="strand" evidence="12">
    <location>
        <begin position="819"/>
        <end position="826"/>
    </location>
</feature>
<feature type="helix" evidence="12">
    <location>
        <begin position="827"/>
        <end position="830"/>
    </location>
</feature>
<dbReference type="EC" id="2.7.7.7" evidence="2"/>
<dbReference type="EMBL" id="J04639">
    <property type="protein sequence ID" value="AAA27507.1"/>
    <property type="molecule type" value="Genomic_DNA"/>
</dbReference>
<dbReference type="EMBL" id="D32013">
    <property type="protein sequence ID" value="BAA06775.1"/>
    <property type="molecule type" value="Genomic_DNA"/>
</dbReference>
<dbReference type="PIR" id="A33530">
    <property type="entry name" value="A33530"/>
</dbReference>
<dbReference type="PIR" id="JX0359">
    <property type="entry name" value="JX0359"/>
</dbReference>
<dbReference type="PDB" id="1BGX">
    <property type="method" value="X-ray"/>
    <property type="resolution" value="2.30 A"/>
    <property type="chains" value="T=1-832"/>
</dbReference>
<dbReference type="PDB" id="1JXE">
    <property type="method" value="X-ray"/>
    <property type="resolution" value="2.85 A"/>
    <property type="chains" value="A=293-832"/>
</dbReference>
<dbReference type="PDB" id="1KTQ">
    <property type="method" value="X-ray"/>
    <property type="resolution" value="2.50 A"/>
    <property type="chains" value="A=290-832"/>
</dbReference>
<dbReference type="PDB" id="1QSS">
    <property type="method" value="X-ray"/>
    <property type="resolution" value="2.30 A"/>
    <property type="chains" value="A=293-831"/>
</dbReference>
<dbReference type="PDB" id="1QSY">
    <property type="method" value="X-ray"/>
    <property type="resolution" value="2.30 A"/>
    <property type="chains" value="A=293-831"/>
</dbReference>
<dbReference type="PDB" id="1QTM">
    <property type="method" value="X-ray"/>
    <property type="resolution" value="2.30 A"/>
    <property type="chains" value="A=293-831"/>
</dbReference>
<dbReference type="PDB" id="1TAQ">
    <property type="method" value="X-ray"/>
    <property type="resolution" value="2.40 A"/>
    <property type="chains" value="A=1-832"/>
</dbReference>
<dbReference type="PDB" id="1TAU">
    <property type="method" value="X-ray"/>
    <property type="resolution" value="3.00 A"/>
    <property type="chains" value="A=1-832"/>
</dbReference>
<dbReference type="PDB" id="2KTQ">
    <property type="method" value="X-ray"/>
    <property type="resolution" value="2.30 A"/>
    <property type="chains" value="A=295-832"/>
</dbReference>
<dbReference type="PDB" id="3KTQ">
    <property type="method" value="X-ray"/>
    <property type="resolution" value="2.30 A"/>
    <property type="chains" value="A=293-832"/>
</dbReference>
<dbReference type="PDB" id="3LWL">
    <property type="method" value="X-ray"/>
    <property type="resolution" value="2.25 A"/>
    <property type="chains" value="A=293-832"/>
</dbReference>
<dbReference type="PDB" id="3LWM">
    <property type="method" value="X-ray"/>
    <property type="resolution" value="2.19 A"/>
    <property type="chains" value="A=293-832"/>
</dbReference>
<dbReference type="PDB" id="3M8R">
    <property type="method" value="X-ray"/>
    <property type="resolution" value="2.00 A"/>
    <property type="chains" value="A=293-832"/>
</dbReference>
<dbReference type="PDB" id="3M8S">
    <property type="method" value="X-ray"/>
    <property type="resolution" value="2.20 A"/>
    <property type="chains" value="A=293-832"/>
</dbReference>
<dbReference type="PDB" id="3OJS">
    <property type="method" value="X-ray"/>
    <property type="resolution" value="1.90 A"/>
    <property type="chains" value="A=293-832"/>
</dbReference>
<dbReference type="PDB" id="3OJU">
    <property type="method" value="X-ray"/>
    <property type="resolution" value="2.00 A"/>
    <property type="chains" value="A=293-832"/>
</dbReference>
<dbReference type="PDB" id="3PO4">
    <property type="method" value="X-ray"/>
    <property type="resolution" value="1.80 A"/>
    <property type="chains" value="A=293-832"/>
</dbReference>
<dbReference type="PDB" id="3PO5">
    <property type="method" value="X-ray"/>
    <property type="resolution" value="2.39 A"/>
    <property type="chains" value="A=293-832"/>
</dbReference>
<dbReference type="PDB" id="3PY8">
    <property type="method" value="X-ray"/>
    <property type="resolution" value="1.74 A"/>
    <property type="chains" value="A=293-832"/>
</dbReference>
<dbReference type="PDB" id="3RR7">
    <property type="method" value="X-ray"/>
    <property type="resolution" value="1.95 A"/>
    <property type="chains" value="A=293-832"/>
</dbReference>
<dbReference type="PDB" id="3RR8">
    <property type="method" value="X-ray"/>
    <property type="resolution" value="2.40 A"/>
    <property type="chains" value="A=293-832"/>
</dbReference>
<dbReference type="PDB" id="3RRG">
    <property type="method" value="X-ray"/>
    <property type="resolution" value="2.30 A"/>
    <property type="chains" value="A=293-832"/>
</dbReference>
<dbReference type="PDB" id="3RRH">
    <property type="method" value="X-ray"/>
    <property type="resolution" value="1.80 A"/>
    <property type="chains" value="A=293-832"/>
</dbReference>
<dbReference type="PDB" id="3RTV">
    <property type="method" value="X-ray"/>
    <property type="resolution" value="1.90 A"/>
    <property type="chains" value="A=293-832"/>
</dbReference>
<dbReference type="PDB" id="3SV3">
    <property type="method" value="X-ray"/>
    <property type="resolution" value="2.10 A"/>
    <property type="chains" value="A=293-832"/>
</dbReference>
<dbReference type="PDB" id="3SV4">
    <property type="method" value="X-ray"/>
    <property type="resolution" value="1.99 A"/>
    <property type="chains" value="A=293-832"/>
</dbReference>
<dbReference type="PDB" id="3SYZ">
    <property type="method" value="X-ray"/>
    <property type="resolution" value="1.95 A"/>
    <property type="chains" value="A=293-832"/>
</dbReference>
<dbReference type="PDB" id="3SZ2">
    <property type="method" value="X-ray"/>
    <property type="resolution" value="2.15 A"/>
    <property type="chains" value="A=293-832"/>
</dbReference>
<dbReference type="PDB" id="3T3F">
    <property type="method" value="X-ray"/>
    <property type="resolution" value="1.90 A"/>
    <property type="chains" value="A=293-832"/>
</dbReference>
<dbReference type="PDB" id="4BWJ">
    <property type="method" value="X-ray"/>
    <property type="resolution" value="1.55 A"/>
    <property type="chains" value="A=293-832"/>
</dbReference>
<dbReference type="PDB" id="4BWM">
    <property type="method" value="X-ray"/>
    <property type="resolution" value="1.75 A"/>
    <property type="chains" value="A=293-832"/>
</dbReference>
<dbReference type="PDB" id="4C8K">
    <property type="method" value="X-ray"/>
    <property type="resolution" value="2.17 A"/>
    <property type="chains" value="A=293-832"/>
</dbReference>
<dbReference type="PDB" id="4C8L">
    <property type="method" value="X-ray"/>
    <property type="resolution" value="1.70 A"/>
    <property type="chains" value="A=293-832"/>
</dbReference>
<dbReference type="PDB" id="4C8M">
    <property type="method" value="X-ray"/>
    <property type="resolution" value="1.57 A"/>
    <property type="chains" value="A=293-832"/>
</dbReference>
<dbReference type="PDB" id="4C8N">
    <property type="method" value="X-ray"/>
    <property type="resolution" value="1.88 A"/>
    <property type="chains" value="A=293-832"/>
</dbReference>
<dbReference type="PDB" id="4C8O">
    <property type="method" value="X-ray"/>
    <property type="resolution" value="1.75 A"/>
    <property type="chains" value="A=293-832"/>
</dbReference>
<dbReference type="PDB" id="4CCH">
    <property type="method" value="X-ray"/>
    <property type="resolution" value="2.55 A"/>
    <property type="chains" value="A=293-832"/>
</dbReference>
<dbReference type="PDB" id="4DF4">
    <property type="method" value="X-ray"/>
    <property type="resolution" value="2.20 A"/>
    <property type="chains" value="A=293-832"/>
</dbReference>
<dbReference type="PDB" id="4DF8">
    <property type="method" value="X-ray"/>
    <property type="resolution" value="2.00 A"/>
    <property type="chains" value="A=293-832"/>
</dbReference>
<dbReference type="PDB" id="4DFJ">
    <property type="method" value="X-ray"/>
    <property type="resolution" value="1.90 A"/>
    <property type="chains" value="A=293-832"/>
</dbReference>
<dbReference type="PDB" id="4DFK">
    <property type="method" value="X-ray"/>
    <property type="resolution" value="1.65 A"/>
    <property type="chains" value="A=293-832"/>
</dbReference>
<dbReference type="PDB" id="4DFM">
    <property type="method" value="X-ray"/>
    <property type="resolution" value="1.89 A"/>
    <property type="chains" value="A=293-832"/>
</dbReference>
<dbReference type="PDB" id="4DFP">
    <property type="method" value="X-ray"/>
    <property type="resolution" value="2.00 A"/>
    <property type="chains" value="A=293-832"/>
</dbReference>
<dbReference type="PDB" id="4DLE">
    <property type="method" value="X-ray"/>
    <property type="resolution" value="2.44 A"/>
    <property type="chains" value="A=293-832"/>
</dbReference>
<dbReference type="PDB" id="4DLG">
    <property type="method" value="X-ray"/>
    <property type="resolution" value="1.89 A"/>
    <property type="chains" value="A=293-832"/>
</dbReference>
<dbReference type="PDB" id="4ELT">
    <property type="method" value="X-ray"/>
    <property type="resolution" value="2.20 A"/>
    <property type="chains" value="A=293-832"/>
</dbReference>
<dbReference type="PDB" id="4ELU">
    <property type="method" value="X-ray"/>
    <property type="resolution" value="1.80 A"/>
    <property type="chains" value="A=293-832"/>
</dbReference>
<dbReference type="PDB" id="4ELV">
    <property type="method" value="X-ray"/>
    <property type="resolution" value="1.90 A"/>
    <property type="chains" value="A=293-832"/>
</dbReference>
<dbReference type="PDB" id="4KTQ">
    <property type="method" value="X-ray"/>
    <property type="resolution" value="2.50 A"/>
    <property type="chains" value="A=294-832"/>
</dbReference>
<dbReference type="PDB" id="4N56">
    <property type="method" value="X-ray"/>
    <property type="resolution" value="2.20 A"/>
    <property type="chains" value="A=281-832"/>
</dbReference>
<dbReference type="PDB" id="4N5S">
    <property type="method" value="X-ray"/>
    <property type="resolution" value="1.67 A"/>
    <property type="chains" value="A=281-832"/>
</dbReference>
<dbReference type="PDB" id="4XIU">
    <property type="method" value="X-ray"/>
    <property type="resolution" value="2.50 A"/>
    <property type="chains" value="A=294-832"/>
</dbReference>
<dbReference type="PDB" id="5E41">
    <property type="method" value="X-ray"/>
    <property type="resolution" value="1.80 A"/>
    <property type="chains" value="A=293-832"/>
</dbReference>
<dbReference type="PDB" id="5KTQ">
    <property type="method" value="X-ray"/>
    <property type="resolution" value="2.50 A"/>
    <property type="chains" value="A=290-832"/>
</dbReference>
<dbReference type="PDB" id="5NKL">
    <property type="method" value="X-ray"/>
    <property type="resolution" value="1.70 A"/>
    <property type="chains" value="A=293-832"/>
</dbReference>
<dbReference type="PDB" id="5O7T">
    <property type="method" value="X-ray"/>
    <property type="resolution" value="1.80 A"/>
    <property type="chains" value="A=293-832"/>
</dbReference>
<dbReference type="PDB" id="5OXJ">
    <property type="method" value="X-ray"/>
    <property type="resolution" value="2.00 A"/>
    <property type="chains" value="A=293-832"/>
</dbReference>
<dbReference type="PDB" id="5SZT">
    <property type="method" value="X-ray"/>
    <property type="resolution" value="1.80 A"/>
    <property type="chains" value="A=293-832"/>
</dbReference>
<dbReference type="PDB" id="5W6K">
    <property type="method" value="X-ray"/>
    <property type="resolution" value="2.34 A"/>
    <property type="chains" value="A=293-832"/>
</dbReference>
<dbReference type="PDB" id="5W6Q">
    <property type="method" value="X-ray"/>
    <property type="resolution" value="2.66 A"/>
    <property type="chains" value="A/C/G=293-832"/>
</dbReference>
<dbReference type="PDB" id="5YTC">
    <property type="method" value="X-ray"/>
    <property type="resolution" value="2.28 A"/>
    <property type="chains" value="A=294-832"/>
</dbReference>
<dbReference type="PDB" id="5YTD">
    <property type="method" value="X-ray"/>
    <property type="resolution" value="2.00 A"/>
    <property type="chains" value="A=294-832"/>
</dbReference>
<dbReference type="PDB" id="5YTE">
    <property type="method" value="X-ray"/>
    <property type="resolution" value="2.21 A"/>
    <property type="chains" value="A=294-832"/>
</dbReference>
<dbReference type="PDB" id="5YTF">
    <property type="method" value="X-ray"/>
    <property type="resolution" value="1.98 A"/>
    <property type="chains" value="A=294-832"/>
</dbReference>
<dbReference type="PDB" id="5YTG">
    <property type="method" value="X-ray"/>
    <property type="resolution" value="2.07 A"/>
    <property type="chains" value="A=294-832"/>
</dbReference>
<dbReference type="PDB" id="5YTH">
    <property type="method" value="X-ray"/>
    <property type="resolution" value="2.53 A"/>
    <property type="chains" value="A=294-832"/>
</dbReference>
<dbReference type="PDB" id="5Z3N">
    <property type="method" value="X-ray"/>
    <property type="resolution" value="1.91 A"/>
    <property type="chains" value="A=294-832"/>
</dbReference>
<dbReference type="PDB" id="6FBC">
    <property type="method" value="X-ray"/>
    <property type="resolution" value="1.54 A"/>
    <property type="chains" value="A=293-832"/>
</dbReference>
<dbReference type="PDB" id="6FBD">
    <property type="method" value="X-ray"/>
    <property type="resolution" value="2.10 A"/>
    <property type="chains" value="A=293-832"/>
</dbReference>
<dbReference type="PDB" id="6FBE">
    <property type="method" value="X-ray"/>
    <property type="resolution" value="1.59 A"/>
    <property type="chains" value="A=293-832"/>
</dbReference>
<dbReference type="PDB" id="6FBF">
    <property type="method" value="X-ray"/>
    <property type="resolution" value="2.00 A"/>
    <property type="chains" value="A=293-832"/>
</dbReference>
<dbReference type="PDB" id="6FBG">
    <property type="method" value="X-ray"/>
    <property type="resolution" value="1.70 A"/>
    <property type="chains" value="A=293-832"/>
</dbReference>
<dbReference type="PDB" id="6FBH">
    <property type="method" value="X-ray"/>
    <property type="resolution" value="1.80 A"/>
    <property type="chains" value="A=293-832"/>
</dbReference>
<dbReference type="PDB" id="6FBI">
    <property type="method" value="X-ray"/>
    <property type="resolution" value="1.90 A"/>
    <property type="chains" value="A=293-832"/>
</dbReference>
<dbReference type="PDB" id="6Q4U">
    <property type="method" value="X-ray"/>
    <property type="resolution" value="2.00 A"/>
    <property type="chains" value="A=293-832"/>
</dbReference>
<dbReference type="PDB" id="6Q4V">
    <property type="method" value="X-ray"/>
    <property type="resolution" value="2.01 A"/>
    <property type="chains" value="A=293-832"/>
</dbReference>
<dbReference type="PDB" id="7OWF">
    <property type="method" value="X-ray"/>
    <property type="resolution" value="1.91 A"/>
    <property type="chains" value="A=293-832"/>
</dbReference>
<dbReference type="PDBsum" id="1BGX"/>
<dbReference type="PDBsum" id="1JXE"/>
<dbReference type="PDBsum" id="1KTQ"/>
<dbReference type="PDBsum" id="1QSS"/>
<dbReference type="PDBsum" id="1QSY"/>
<dbReference type="PDBsum" id="1QTM"/>
<dbReference type="PDBsum" id="1TAQ"/>
<dbReference type="PDBsum" id="1TAU"/>
<dbReference type="PDBsum" id="2KTQ"/>
<dbReference type="PDBsum" id="3KTQ"/>
<dbReference type="PDBsum" id="3LWL"/>
<dbReference type="PDBsum" id="3LWM"/>
<dbReference type="PDBsum" id="3M8R"/>
<dbReference type="PDBsum" id="3M8S"/>
<dbReference type="PDBsum" id="3OJS"/>
<dbReference type="PDBsum" id="3OJU"/>
<dbReference type="PDBsum" id="3PO4"/>
<dbReference type="PDBsum" id="3PO5"/>
<dbReference type="PDBsum" id="3PY8"/>
<dbReference type="PDBsum" id="3RR7"/>
<dbReference type="PDBsum" id="3RR8"/>
<dbReference type="PDBsum" id="3RRG"/>
<dbReference type="PDBsum" id="3RRH"/>
<dbReference type="PDBsum" id="3RTV"/>
<dbReference type="PDBsum" id="3SV3"/>
<dbReference type="PDBsum" id="3SV4"/>
<dbReference type="PDBsum" id="3SYZ"/>
<dbReference type="PDBsum" id="3SZ2"/>
<dbReference type="PDBsum" id="3T3F"/>
<dbReference type="PDBsum" id="4BWJ"/>
<dbReference type="PDBsum" id="4BWM"/>
<dbReference type="PDBsum" id="4C8K"/>
<dbReference type="PDBsum" id="4C8L"/>
<dbReference type="PDBsum" id="4C8M"/>
<dbReference type="PDBsum" id="4C8N"/>
<dbReference type="PDBsum" id="4C8O"/>
<dbReference type="PDBsum" id="4CCH"/>
<dbReference type="PDBsum" id="4DF4"/>
<dbReference type="PDBsum" id="4DF8"/>
<dbReference type="PDBsum" id="4DFJ"/>
<dbReference type="PDBsum" id="4DFK"/>
<dbReference type="PDBsum" id="4DFM"/>
<dbReference type="PDBsum" id="4DFP"/>
<dbReference type="PDBsum" id="4DLE"/>
<dbReference type="PDBsum" id="4DLG"/>
<dbReference type="PDBsum" id="4ELT"/>
<dbReference type="PDBsum" id="4ELU"/>
<dbReference type="PDBsum" id="4ELV"/>
<dbReference type="PDBsum" id="4KTQ"/>
<dbReference type="PDBsum" id="4N56"/>
<dbReference type="PDBsum" id="4N5S"/>
<dbReference type="PDBsum" id="4XIU"/>
<dbReference type="PDBsum" id="5E41"/>
<dbReference type="PDBsum" id="5KTQ"/>
<dbReference type="PDBsum" id="5NKL"/>
<dbReference type="PDBsum" id="5O7T"/>
<dbReference type="PDBsum" id="5OXJ"/>
<dbReference type="PDBsum" id="5SZT"/>
<dbReference type="PDBsum" id="5W6K"/>
<dbReference type="PDBsum" id="5W6Q"/>
<dbReference type="PDBsum" id="5YTC"/>
<dbReference type="PDBsum" id="5YTD"/>
<dbReference type="PDBsum" id="5YTE"/>
<dbReference type="PDBsum" id="5YTF"/>
<dbReference type="PDBsum" id="5YTG"/>
<dbReference type="PDBsum" id="5YTH"/>
<dbReference type="PDBsum" id="5Z3N"/>
<dbReference type="PDBsum" id="6FBC"/>
<dbReference type="PDBsum" id="6FBD"/>
<dbReference type="PDBsum" id="6FBE"/>
<dbReference type="PDBsum" id="6FBF"/>
<dbReference type="PDBsum" id="6FBG"/>
<dbReference type="PDBsum" id="6FBH"/>
<dbReference type="PDBsum" id="6FBI"/>
<dbReference type="PDBsum" id="6Q4U"/>
<dbReference type="PDBsum" id="6Q4V"/>
<dbReference type="PDBsum" id="7OWF"/>
<dbReference type="SMR" id="P19821"/>
<dbReference type="BindingDB" id="P19821"/>
<dbReference type="ChEMBL" id="CHEMBL3564"/>
<dbReference type="DrugBank" id="DB03258">
    <property type="generic name" value="2'-Deoxycytidine 5'-triphosphate"/>
</dbReference>
<dbReference type="DrugBank" id="DB03152">
    <property type="generic name" value="B-2-Octylglucoside"/>
</dbReference>
<dbReference type="ABCD" id="P19821">
    <property type="antibodies" value="1 sequenced antibody"/>
</dbReference>
<dbReference type="BRENDA" id="2.7.7.7">
    <property type="organism ID" value="6334"/>
</dbReference>
<dbReference type="EvolutionaryTrace" id="P19821"/>
<dbReference type="GO" id="GO:0008409">
    <property type="term" value="F:5'-3' exonuclease activity"/>
    <property type="evidence" value="ECO:0007669"/>
    <property type="project" value="InterPro"/>
</dbReference>
<dbReference type="GO" id="GO:0003677">
    <property type="term" value="F:DNA binding"/>
    <property type="evidence" value="ECO:0007669"/>
    <property type="project" value="UniProtKB-KW"/>
</dbReference>
<dbReference type="GO" id="GO:0003887">
    <property type="term" value="F:DNA-directed DNA polymerase activity"/>
    <property type="evidence" value="ECO:0007669"/>
    <property type="project" value="UniProtKB-KW"/>
</dbReference>
<dbReference type="GO" id="GO:0001882">
    <property type="term" value="F:nucleoside binding"/>
    <property type="evidence" value="ECO:0007669"/>
    <property type="project" value="InterPro"/>
</dbReference>
<dbReference type="GO" id="GO:0006261">
    <property type="term" value="P:DNA-templated DNA replication"/>
    <property type="evidence" value="ECO:0007669"/>
    <property type="project" value="InterPro"/>
</dbReference>
<dbReference type="GO" id="GO:0006302">
    <property type="term" value="P:double-strand break repair"/>
    <property type="evidence" value="ECO:0007669"/>
    <property type="project" value="TreeGrafter"/>
</dbReference>
<dbReference type="CDD" id="cd08637">
    <property type="entry name" value="DNA_pol_A_pol_I_C"/>
    <property type="match status" value="1"/>
</dbReference>
<dbReference type="CDD" id="cd09898">
    <property type="entry name" value="H3TH_53EXO"/>
    <property type="match status" value="1"/>
</dbReference>
<dbReference type="CDD" id="cd09859">
    <property type="entry name" value="PIN_53EXO"/>
    <property type="match status" value="1"/>
</dbReference>
<dbReference type="FunFam" id="1.10.150.20:FF:000002">
    <property type="entry name" value="DNA polymerase I"/>
    <property type="match status" value="1"/>
</dbReference>
<dbReference type="FunFam" id="1.10.150.20:FF:000003">
    <property type="entry name" value="DNA polymerase I"/>
    <property type="match status" value="1"/>
</dbReference>
<dbReference type="FunFam" id="1.20.1060.10:FF:000001">
    <property type="entry name" value="DNA polymerase I"/>
    <property type="match status" value="1"/>
</dbReference>
<dbReference type="Gene3D" id="3.30.70.370">
    <property type="match status" value="1"/>
</dbReference>
<dbReference type="Gene3D" id="1.10.150.20">
    <property type="entry name" value="5' to 3' exonuclease, C-terminal subdomain"/>
    <property type="match status" value="2"/>
</dbReference>
<dbReference type="Gene3D" id="3.40.50.1010">
    <property type="entry name" value="5'-nuclease"/>
    <property type="match status" value="1"/>
</dbReference>
<dbReference type="Gene3D" id="3.30.420.10">
    <property type="entry name" value="Ribonuclease H-like superfamily/Ribonuclease H"/>
    <property type="match status" value="1"/>
</dbReference>
<dbReference type="Gene3D" id="1.20.1060.10">
    <property type="entry name" value="Taq DNA Polymerase, Chain T, domain 4"/>
    <property type="match status" value="1"/>
</dbReference>
<dbReference type="InterPro" id="IPR020046">
    <property type="entry name" value="5-3_exonucl_a-hlix_arch_N"/>
</dbReference>
<dbReference type="InterPro" id="IPR002421">
    <property type="entry name" value="5-3_exonuclease"/>
</dbReference>
<dbReference type="InterPro" id="IPR036279">
    <property type="entry name" value="5-3_exonuclease_C_sf"/>
</dbReference>
<dbReference type="InterPro" id="IPR019760">
    <property type="entry name" value="DNA-dir_DNA_pol_A_CS"/>
</dbReference>
<dbReference type="InterPro" id="IPR001098">
    <property type="entry name" value="DNA-dir_DNA_pol_A_palm_dom"/>
</dbReference>
<dbReference type="InterPro" id="IPR043502">
    <property type="entry name" value="DNA/RNA_pol_sf"/>
</dbReference>
<dbReference type="InterPro" id="IPR020045">
    <property type="entry name" value="DNA_polI_H3TH"/>
</dbReference>
<dbReference type="InterPro" id="IPR018320">
    <property type="entry name" value="DNA_polymerase_1"/>
</dbReference>
<dbReference type="InterPro" id="IPR002298">
    <property type="entry name" value="DNA_polymerase_A"/>
</dbReference>
<dbReference type="InterPro" id="IPR008918">
    <property type="entry name" value="HhH2"/>
</dbReference>
<dbReference type="InterPro" id="IPR003583">
    <property type="entry name" value="Hlx-hairpin-Hlx_DNA-bd_motif"/>
</dbReference>
<dbReference type="InterPro" id="IPR029060">
    <property type="entry name" value="PIN-like_dom_sf"/>
</dbReference>
<dbReference type="InterPro" id="IPR012337">
    <property type="entry name" value="RNaseH-like_sf"/>
</dbReference>
<dbReference type="InterPro" id="IPR036397">
    <property type="entry name" value="RNaseH_sf"/>
</dbReference>
<dbReference type="InterPro" id="IPR015361">
    <property type="entry name" value="Taq_pol_thermo_exonuc"/>
</dbReference>
<dbReference type="NCBIfam" id="TIGR00593">
    <property type="entry name" value="pola"/>
    <property type="match status" value="1"/>
</dbReference>
<dbReference type="PANTHER" id="PTHR10133">
    <property type="entry name" value="DNA POLYMERASE I"/>
    <property type="match status" value="1"/>
</dbReference>
<dbReference type="PANTHER" id="PTHR10133:SF27">
    <property type="entry name" value="DNA POLYMERASE NU"/>
    <property type="match status" value="1"/>
</dbReference>
<dbReference type="Pfam" id="PF01367">
    <property type="entry name" value="5_3_exonuc"/>
    <property type="match status" value="1"/>
</dbReference>
<dbReference type="Pfam" id="PF02739">
    <property type="entry name" value="5_3_exonuc_N"/>
    <property type="match status" value="1"/>
</dbReference>
<dbReference type="Pfam" id="PF00476">
    <property type="entry name" value="DNA_pol_A"/>
    <property type="match status" value="1"/>
</dbReference>
<dbReference type="Pfam" id="PF09281">
    <property type="entry name" value="Taq-exonuc"/>
    <property type="match status" value="1"/>
</dbReference>
<dbReference type="PRINTS" id="PR00868">
    <property type="entry name" value="DNAPOLI"/>
</dbReference>
<dbReference type="SMART" id="SM00475">
    <property type="entry name" value="53EXOc"/>
    <property type="match status" value="1"/>
</dbReference>
<dbReference type="SMART" id="SM00278">
    <property type="entry name" value="HhH1"/>
    <property type="match status" value="2"/>
</dbReference>
<dbReference type="SMART" id="SM00279">
    <property type="entry name" value="HhH2"/>
    <property type="match status" value="1"/>
</dbReference>
<dbReference type="SMART" id="SM00482">
    <property type="entry name" value="POLAc"/>
    <property type="match status" value="1"/>
</dbReference>
<dbReference type="SUPFAM" id="SSF47807">
    <property type="entry name" value="5' to 3' exonuclease, C-terminal subdomain"/>
    <property type="match status" value="1"/>
</dbReference>
<dbReference type="SUPFAM" id="SSF56672">
    <property type="entry name" value="DNA/RNA polymerases"/>
    <property type="match status" value="1"/>
</dbReference>
<dbReference type="SUPFAM" id="SSF88723">
    <property type="entry name" value="PIN domain-like"/>
    <property type="match status" value="1"/>
</dbReference>
<dbReference type="SUPFAM" id="SSF53098">
    <property type="entry name" value="Ribonuclease H-like"/>
    <property type="match status" value="1"/>
</dbReference>
<dbReference type="PROSITE" id="PS00447">
    <property type="entry name" value="DNA_POLYMERASE_A"/>
    <property type="match status" value="1"/>
</dbReference>
<gene>
    <name type="primary">polA</name>
    <name type="synonym">pol1</name>
</gene>
<accession>P19821</accession>
<protein>
    <recommendedName>
        <fullName>DNA polymerase I, thermostable</fullName>
        <ecNumber evidence="2">2.7.7.7</ecNumber>
    </recommendedName>
    <alternativeName>
        <fullName>Taq polymerase 1</fullName>
    </alternativeName>
</protein>
<organism>
    <name type="scientific">Thermus aquaticus</name>
    <dbReference type="NCBI Taxonomy" id="271"/>
    <lineage>
        <taxon>Bacteria</taxon>
        <taxon>Thermotogati</taxon>
        <taxon>Deinococcota</taxon>
        <taxon>Deinococci</taxon>
        <taxon>Thermales</taxon>
        <taxon>Thermaceae</taxon>
        <taxon>Thermus</taxon>
    </lineage>
</organism>
<proteinExistence type="evidence at protein level"/>
<comment type="function">
    <text evidence="2 5">In addition to polymerase activity, this DNA polymerase exhibits 5'-3' exonuclease activity (By similarity). Unlikely to have 3'-5' exonuclease activity due to absence of a 3'-5' exonuclease domain (Probable).</text>
</comment>
<comment type="catalytic activity">
    <reaction evidence="2">
        <text>DNA(n) + a 2'-deoxyribonucleoside 5'-triphosphate = DNA(n+1) + diphosphate</text>
        <dbReference type="Rhea" id="RHEA:22508"/>
        <dbReference type="Rhea" id="RHEA-COMP:17339"/>
        <dbReference type="Rhea" id="RHEA-COMP:17340"/>
        <dbReference type="ChEBI" id="CHEBI:33019"/>
        <dbReference type="ChEBI" id="CHEBI:61560"/>
        <dbReference type="ChEBI" id="CHEBI:173112"/>
        <dbReference type="EC" id="2.7.7.7"/>
    </reaction>
</comment>
<comment type="biotechnology">
    <text evidence="4">Used in the PCR method because of its high thermostability. Has a relatively high error rate probably related to the lack of exonuclease proofreading functionality.</text>
</comment>
<comment type="similarity">
    <text evidence="4">Belongs to the DNA polymerase type-A family.</text>
</comment>
<reference key="1">
    <citation type="journal article" date="1989" name="J. Biol. Chem.">
        <title>Isolation, characterization, and expression in Escherichia coli of the DNA polymerase gene from Thermus aquaticus.</title>
        <authorList>
            <person name="Lawyer F.C."/>
            <person name="Stoffel S."/>
            <person name="Saiki R.K."/>
            <person name="Myambo K."/>
            <person name="Drummond R."/>
            <person name="Gelfand D.H."/>
        </authorList>
    </citation>
    <scope>NUCLEOTIDE SEQUENCE [GENOMIC DNA]</scope>
</reference>
<reference key="2">
    <citation type="journal article" date="1994" name="J. Biochem.">
        <title>Overproduction of Thermus aquaticus DNA polymerase and its structural analysis by ion-spray mass spectrometry.</title>
        <authorList>
            <person name="Ishino Y."/>
            <person name="Ueno T."/>
            <person name="Miyagi M."/>
            <person name="Uemori T."/>
            <person name="Imamura M."/>
            <person name="Tsunasawa S."/>
            <person name="Kato I."/>
        </authorList>
    </citation>
    <scope>NUCLEOTIDE SEQUENCE [GENOMIC DNA]</scope>
    <scope>PARTIAL PROTEIN SEQUENCE</scope>
    <source>
        <strain>ATCC 25104 / DSM 625 / JCM 10724 / NBRC 103206 / NCIMB 11243 / YT-1</strain>
    </source>
</reference>
<reference key="3">
    <citation type="journal article" date="1995" name="Nature">
        <title>Crystal structure of Thermus aquaticus DNA polymerase.</title>
        <authorList>
            <person name="Kim Y."/>
            <person name="Eom S.H."/>
            <person name="Wang J."/>
            <person name="Lee D.-S."/>
            <person name="Suh S.W."/>
            <person name="Steitz T.A."/>
        </authorList>
    </citation>
    <scope>X-RAY CRYSTALLOGRAPHY (2.4 ANGSTROMS)</scope>
</reference>
<reference key="4">
    <citation type="journal article" date="1995" name="Proc. Natl. Acad. Sci. U.S.A.">
        <title>Crystal structure of the large fragment of Thermus aquaticus DNA polymerase I at 2.5-A resolution: structural basis for thermostability.</title>
        <authorList>
            <person name="Korolev S."/>
            <person name="Nayal M."/>
            <person name="Barnes W.M."/>
            <person name="di Cera E."/>
            <person name="Waksman G."/>
        </authorList>
    </citation>
    <scope>X-RAY CRYSTALLOGRAPHY (2.5 ANGSTROMS) OF 290-832</scope>
</reference>
<reference key="5">
    <citation type="journal article" date="1996" name="Nature">
        <title>Structure of Taq polymerase with DNA at the polymerase active site.</title>
        <authorList>
            <person name="Eom S.H."/>
            <person name="Wang J."/>
            <person name="Steitz T.A."/>
        </authorList>
    </citation>
    <scope>X-RAY CRYSTALLOGRAPHY (3.0 ANGSTROMS)</scope>
</reference>
<reference key="6">
    <citation type="journal article" date="1998" name="EMBO J.">
        <title>Crystal structures of open and closed forms of binary and ternary complexes of the large fragment of Thermus aquaticus DNA polymerase I: structural basis for nucleotide incorporation.</title>
        <authorList>
            <person name="Li Y."/>
            <person name="Korolev S."/>
            <person name="Waksman G."/>
        </authorList>
    </citation>
    <scope>X-RAY CRYSTALLOGRAPHY (2.3 ANGSTROMS) OF 295-832</scope>
</reference>
<reference key="7">
    <citation type="journal article" date="1998" name="Protein Sci.">
        <title>Crystal structures of the Klenow fragment of Thermus aquaticus DNA polymerase I complexed with deoxyribonucleoside triphosphates.</title>
        <authorList>
            <person name="Li Y."/>
            <person name="Kong Y."/>
            <person name="Korolev S."/>
            <person name="Waksman G."/>
        </authorList>
    </citation>
    <scope>X-RAY CRYSTALLOGRAPHY (2.5 ANGSTROMS) OF 290-832</scope>
</reference>
<reference key="8">
    <citation type="journal article" date="1999" name="Proc. Natl. Acad. Sci. U.S.A.">
        <title>Structure-based design of Taq DNA polymerases with improved properties of dideoxynucleotide incorporation.</title>
        <authorList>
            <person name="Li Y."/>
            <person name="Mitaxov V."/>
            <person name="Waksman G."/>
        </authorList>
    </citation>
    <scope>X-RAY CRYSTALLOGRAPHY (2.3 ANGSTROMS) OF 293-831</scope>
</reference>
<name>DPO1_THEAQ</name>
<keyword id="KW-0002">3D-structure</keyword>
<keyword id="KW-0903">Direct protein sequencing</keyword>
<keyword id="KW-0227">DNA damage</keyword>
<keyword id="KW-0234">DNA repair</keyword>
<keyword id="KW-0235">DNA replication</keyword>
<keyword id="KW-0238">DNA-binding</keyword>
<keyword id="KW-0239">DNA-directed DNA polymerase</keyword>
<keyword id="KW-0269">Exonuclease</keyword>
<keyword id="KW-0378">Hydrolase</keyword>
<keyword id="KW-0540">Nuclease</keyword>
<keyword id="KW-0548">Nucleotidyltransferase</keyword>
<keyword id="KW-0808">Transferase</keyword>